<evidence type="ECO:0000255" key="1">
    <source>
        <dbReference type="HAMAP-Rule" id="MF_00015"/>
    </source>
</evidence>
<organism>
    <name type="scientific">Erwinia tasmaniensis (strain DSM 17950 / CFBP 7177 / CIP 109463 / NCPPB 4357 / Et1/99)</name>
    <dbReference type="NCBI Taxonomy" id="465817"/>
    <lineage>
        <taxon>Bacteria</taxon>
        <taxon>Pseudomonadati</taxon>
        <taxon>Pseudomonadota</taxon>
        <taxon>Gammaproteobacteria</taxon>
        <taxon>Enterobacterales</taxon>
        <taxon>Erwiniaceae</taxon>
        <taxon>Erwinia</taxon>
    </lineage>
</organism>
<accession>B2VKA1</accession>
<name>LEXA_ERWT9</name>
<comment type="function">
    <text evidence="1">Represses a number of genes involved in the response to DNA damage (SOS response), including recA and lexA. Binds to the 16 bp palindromic sequence 5'-CTGTATATATATACAG-3'. In the presence of single-stranded DNA, RecA interacts with LexA causing an autocatalytic cleavage which disrupts the DNA-binding part of LexA, leading to derepression of the SOS regulon and eventually DNA repair.</text>
</comment>
<comment type="catalytic activity">
    <reaction evidence="1">
        <text>Hydrolysis of Ala-|-Gly bond in repressor LexA.</text>
        <dbReference type="EC" id="3.4.21.88"/>
    </reaction>
</comment>
<comment type="subunit">
    <text evidence="1">Homodimer.</text>
</comment>
<comment type="similarity">
    <text evidence="1">Belongs to the peptidase S24 family.</text>
</comment>
<proteinExistence type="inferred from homology"/>
<feature type="chain" id="PRO_1000089564" description="LexA repressor">
    <location>
        <begin position="1"/>
        <end position="202"/>
    </location>
</feature>
<feature type="DNA-binding region" description="H-T-H motif" evidence="1">
    <location>
        <begin position="28"/>
        <end position="48"/>
    </location>
</feature>
<feature type="active site" description="For autocatalytic cleavage activity" evidence="1">
    <location>
        <position position="119"/>
    </location>
</feature>
<feature type="active site" description="For autocatalytic cleavage activity" evidence="1">
    <location>
        <position position="156"/>
    </location>
</feature>
<feature type="site" description="Cleavage; by autolysis" evidence="1">
    <location>
        <begin position="84"/>
        <end position="85"/>
    </location>
</feature>
<sequence length="202" mass="22172">MKALTARQQQVYDLIRDHINQTGMPPTRAEIAAQLGFRSPNAAEEHLKALARKGVIEIVSGASRGIRLMMEDESGLPLIGRVAAGEPLLAEQHIEGHYQVDPGLFKPGADFLLRVSGMSMKNIGIMDGDLLAVHKTEDVRNGQVVVARIDDEVTVKRLKKNGNMVELLPENPDFQPIVVDLRQQTLTIEGLAVGVIRNGNWL</sequence>
<protein>
    <recommendedName>
        <fullName evidence="1">LexA repressor</fullName>
        <ecNumber evidence="1">3.4.21.88</ecNumber>
    </recommendedName>
</protein>
<reference key="1">
    <citation type="journal article" date="2008" name="Environ. Microbiol.">
        <title>The genome of Erwinia tasmaniensis strain Et1/99, a non-pathogenic bacterium in the genus Erwinia.</title>
        <authorList>
            <person name="Kube M."/>
            <person name="Migdoll A.M."/>
            <person name="Mueller I."/>
            <person name="Kuhl H."/>
            <person name="Beck A."/>
            <person name="Reinhardt R."/>
            <person name="Geider K."/>
        </authorList>
    </citation>
    <scope>NUCLEOTIDE SEQUENCE [LARGE SCALE GENOMIC DNA]</scope>
    <source>
        <strain>DSM 17950 / CFBP 7177 / CIP 109463 / NCPPB 4357 / Et1/99</strain>
    </source>
</reference>
<dbReference type="EC" id="3.4.21.88" evidence="1"/>
<dbReference type="EMBL" id="CU468135">
    <property type="protein sequence ID" value="CAO98147.1"/>
    <property type="molecule type" value="Genomic_DNA"/>
</dbReference>
<dbReference type="RefSeq" id="WP_012442797.1">
    <property type="nucleotide sequence ID" value="NC_010694.1"/>
</dbReference>
<dbReference type="SMR" id="B2VKA1"/>
<dbReference type="STRING" id="465817.ETA_31010"/>
<dbReference type="MEROPS" id="S24.001"/>
<dbReference type="KEGG" id="eta:ETA_31010"/>
<dbReference type="eggNOG" id="COG1974">
    <property type="taxonomic scope" value="Bacteria"/>
</dbReference>
<dbReference type="HOGENOM" id="CLU_066192_45_3_6"/>
<dbReference type="OrthoDB" id="9802364at2"/>
<dbReference type="Proteomes" id="UP000001726">
    <property type="component" value="Chromosome"/>
</dbReference>
<dbReference type="GO" id="GO:0003677">
    <property type="term" value="F:DNA binding"/>
    <property type="evidence" value="ECO:0007669"/>
    <property type="project" value="UniProtKB-UniRule"/>
</dbReference>
<dbReference type="GO" id="GO:0004252">
    <property type="term" value="F:serine-type endopeptidase activity"/>
    <property type="evidence" value="ECO:0007669"/>
    <property type="project" value="UniProtKB-UniRule"/>
</dbReference>
<dbReference type="GO" id="GO:0006281">
    <property type="term" value="P:DNA repair"/>
    <property type="evidence" value="ECO:0007669"/>
    <property type="project" value="UniProtKB-UniRule"/>
</dbReference>
<dbReference type="GO" id="GO:0006260">
    <property type="term" value="P:DNA replication"/>
    <property type="evidence" value="ECO:0007669"/>
    <property type="project" value="UniProtKB-UniRule"/>
</dbReference>
<dbReference type="GO" id="GO:0045892">
    <property type="term" value="P:negative regulation of DNA-templated transcription"/>
    <property type="evidence" value="ECO:0007669"/>
    <property type="project" value="UniProtKB-UniRule"/>
</dbReference>
<dbReference type="GO" id="GO:0006508">
    <property type="term" value="P:proteolysis"/>
    <property type="evidence" value="ECO:0007669"/>
    <property type="project" value="InterPro"/>
</dbReference>
<dbReference type="GO" id="GO:0009432">
    <property type="term" value="P:SOS response"/>
    <property type="evidence" value="ECO:0007669"/>
    <property type="project" value="UniProtKB-UniRule"/>
</dbReference>
<dbReference type="CDD" id="cd06529">
    <property type="entry name" value="S24_LexA-like"/>
    <property type="match status" value="1"/>
</dbReference>
<dbReference type="FunFam" id="1.10.10.10:FF:000009">
    <property type="entry name" value="LexA repressor"/>
    <property type="match status" value="1"/>
</dbReference>
<dbReference type="FunFam" id="2.10.109.10:FF:000001">
    <property type="entry name" value="LexA repressor"/>
    <property type="match status" value="1"/>
</dbReference>
<dbReference type="Gene3D" id="2.10.109.10">
    <property type="entry name" value="Umud Fragment, subunit A"/>
    <property type="match status" value="1"/>
</dbReference>
<dbReference type="Gene3D" id="1.10.10.10">
    <property type="entry name" value="Winged helix-like DNA-binding domain superfamily/Winged helix DNA-binding domain"/>
    <property type="match status" value="1"/>
</dbReference>
<dbReference type="HAMAP" id="MF_00015">
    <property type="entry name" value="LexA"/>
    <property type="match status" value="1"/>
</dbReference>
<dbReference type="InterPro" id="IPR006200">
    <property type="entry name" value="LexA"/>
</dbReference>
<dbReference type="InterPro" id="IPR039418">
    <property type="entry name" value="LexA-like"/>
</dbReference>
<dbReference type="InterPro" id="IPR036286">
    <property type="entry name" value="LexA/Signal_pep-like_sf"/>
</dbReference>
<dbReference type="InterPro" id="IPR006199">
    <property type="entry name" value="LexA_DNA-bd_dom"/>
</dbReference>
<dbReference type="InterPro" id="IPR050077">
    <property type="entry name" value="LexA_repressor"/>
</dbReference>
<dbReference type="InterPro" id="IPR006197">
    <property type="entry name" value="Peptidase_S24_LexA"/>
</dbReference>
<dbReference type="InterPro" id="IPR015927">
    <property type="entry name" value="Peptidase_S24_S26A/B/C"/>
</dbReference>
<dbReference type="InterPro" id="IPR036388">
    <property type="entry name" value="WH-like_DNA-bd_sf"/>
</dbReference>
<dbReference type="InterPro" id="IPR036390">
    <property type="entry name" value="WH_DNA-bd_sf"/>
</dbReference>
<dbReference type="NCBIfam" id="TIGR00498">
    <property type="entry name" value="lexA"/>
    <property type="match status" value="1"/>
</dbReference>
<dbReference type="PANTHER" id="PTHR33516">
    <property type="entry name" value="LEXA REPRESSOR"/>
    <property type="match status" value="1"/>
</dbReference>
<dbReference type="PANTHER" id="PTHR33516:SF2">
    <property type="entry name" value="LEXA REPRESSOR-RELATED"/>
    <property type="match status" value="1"/>
</dbReference>
<dbReference type="Pfam" id="PF01726">
    <property type="entry name" value="LexA_DNA_bind"/>
    <property type="match status" value="1"/>
</dbReference>
<dbReference type="Pfam" id="PF00717">
    <property type="entry name" value="Peptidase_S24"/>
    <property type="match status" value="1"/>
</dbReference>
<dbReference type="PRINTS" id="PR00726">
    <property type="entry name" value="LEXASERPTASE"/>
</dbReference>
<dbReference type="SUPFAM" id="SSF51306">
    <property type="entry name" value="LexA/Signal peptidase"/>
    <property type="match status" value="1"/>
</dbReference>
<dbReference type="SUPFAM" id="SSF46785">
    <property type="entry name" value="Winged helix' DNA-binding domain"/>
    <property type="match status" value="1"/>
</dbReference>
<keyword id="KW-0068">Autocatalytic cleavage</keyword>
<keyword id="KW-0227">DNA damage</keyword>
<keyword id="KW-0234">DNA repair</keyword>
<keyword id="KW-0235">DNA replication</keyword>
<keyword id="KW-0238">DNA-binding</keyword>
<keyword id="KW-0378">Hydrolase</keyword>
<keyword id="KW-1185">Reference proteome</keyword>
<keyword id="KW-0678">Repressor</keyword>
<keyword id="KW-0742">SOS response</keyword>
<keyword id="KW-0804">Transcription</keyword>
<keyword id="KW-0805">Transcription regulation</keyword>
<gene>
    <name evidence="1" type="primary">lexA</name>
    <name type="ordered locus">ETA_31010</name>
</gene>